<name>TAF8_MOUSE</name>
<feature type="initiator methionine" description="Removed" evidence="1">
    <location>
        <position position="1"/>
    </location>
</feature>
<feature type="chain" id="PRO_0000315398" description="Transcription initiation factor TFIID subunit 8">
    <location>
        <begin position="2"/>
        <end position="308"/>
    </location>
</feature>
<feature type="domain" description="Histone-fold">
    <location>
        <begin position="35"/>
        <end position="102"/>
    </location>
</feature>
<feature type="region of interest" description="Disordered" evidence="3">
    <location>
        <begin position="1"/>
        <end position="29"/>
    </location>
</feature>
<feature type="region of interest" description="Disordered" evidence="3">
    <location>
        <begin position="235"/>
        <end position="308"/>
    </location>
</feature>
<feature type="short sequence motif" description="Nuclear localization signal" evidence="2">
    <location>
        <begin position="292"/>
        <end position="305"/>
    </location>
</feature>
<feature type="compositionally biased region" description="Polar residues" evidence="3">
    <location>
        <begin position="14"/>
        <end position="24"/>
    </location>
</feature>
<feature type="compositionally biased region" description="Acidic residues" evidence="3">
    <location>
        <begin position="235"/>
        <end position="248"/>
    </location>
</feature>
<feature type="compositionally biased region" description="Low complexity" evidence="3">
    <location>
        <begin position="268"/>
        <end position="281"/>
    </location>
</feature>
<feature type="compositionally biased region" description="Basic residues" evidence="3">
    <location>
        <begin position="295"/>
        <end position="308"/>
    </location>
</feature>
<feature type="modified residue" description="N-acetylalanine" evidence="1">
    <location>
        <position position="2"/>
    </location>
</feature>
<feature type="modified residue" description="Phosphothreonine" evidence="1">
    <location>
        <position position="128"/>
    </location>
</feature>
<feature type="modified residue" description="Phosphoserine" evidence="1">
    <location>
        <position position="269"/>
    </location>
</feature>
<feature type="splice variant" id="VSP_030550" description="In isoform 5." evidence="6">
    <original>AARPFTIPY</original>
    <variation>SDQHLIKAP</variation>
    <location>
        <begin position="213"/>
        <end position="221"/>
    </location>
</feature>
<feature type="splice variant" id="VSP_030551" description="In isoform 5." evidence="6">
    <location>
        <begin position="222"/>
        <end position="308"/>
    </location>
</feature>
<feature type="splice variant" id="VSP_030552" description="In isoform 4." evidence="7">
    <original>DDSGAEKESASVLQQSSSLSGSRNGEESVIDNPYLRPVKKPKIRRKKSLS</original>
    <variation>VGPPLLPASQQSQNSLSHILPLPLGTEQGLPQVSGWLLQACMMGCVSSLHHETHLLGSHTFSRW</variation>
    <location>
        <begin position="259"/>
        <end position="308"/>
    </location>
</feature>
<feature type="splice variant" id="VSP_030553" description="In isoform 3." evidence="7">
    <original>DDSGAEK</original>
    <variation>GHPEASA</variation>
    <location>
        <begin position="259"/>
        <end position="265"/>
    </location>
</feature>
<feature type="splice variant" id="VSP_030554" description="In isoform 3." evidence="7">
    <location>
        <begin position="266"/>
        <end position="308"/>
    </location>
</feature>
<feature type="splice variant" id="VSP_030555" description="In isoform 2." evidence="7">
    <location>
        <begin position="306"/>
        <end position="308"/>
    </location>
</feature>
<feature type="sequence conflict" description="In Ref. 2; BAC36363." evidence="8" ref="2">
    <original>V</original>
    <variation>L</variation>
    <location>
        <position position="127"/>
    </location>
</feature>
<feature type="sequence conflict" description="In Ref. 2; BAC34001." evidence="8" ref="2">
    <original>D</original>
    <variation>V</variation>
    <location>
        <position position="153"/>
    </location>
</feature>
<feature type="sequence conflict" description="In Ref. 2; BAC34001." evidence="8" ref="2">
    <original>E</original>
    <variation>G</variation>
    <location>
        <position position="236"/>
    </location>
</feature>
<reference key="1">
    <citation type="journal article" date="2000" name="Development">
        <title>Taube nuss is a novel gene essential for the survival of pluripotent cells of early mouse embryos.</title>
        <authorList>
            <person name="Voss A.K."/>
            <person name="Thomas T."/>
            <person name="Petrou P."/>
            <person name="Anastassiadis K."/>
            <person name="Schoeler H."/>
            <person name="Gruss P."/>
        </authorList>
    </citation>
    <scope>NUCLEOTIDE SEQUENCE [MRNA] (ISOFORM 1)</scope>
    <scope>FUNCTION</scope>
    <scope>SUBCELLULAR LOCATION</scope>
    <scope>DEVELOPMENTAL STAGE</scope>
    <scope>DISRUPTION PHENOTYPE</scope>
</reference>
<reference key="2">
    <citation type="journal article" date="2005" name="Science">
        <title>The transcriptional landscape of the mammalian genome.</title>
        <authorList>
            <person name="Carninci P."/>
            <person name="Kasukawa T."/>
            <person name="Katayama S."/>
            <person name="Gough J."/>
            <person name="Frith M.C."/>
            <person name="Maeda N."/>
            <person name="Oyama R."/>
            <person name="Ravasi T."/>
            <person name="Lenhard B."/>
            <person name="Wells C."/>
            <person name="Kodzius R."/>
            <person name="Shimokawa K."/>
            <person name="Bajic V.B."/>
            <person name="Brenner S.E."/>
            <person name="Batalov S."/>
            <person name="Forrest A.R."/>
            <person name="Zavolan M."/>
            <person name="Davis M.J."/>
            <person name="Wilming L.G."/>
            <person name="Aidinis V."/>
            <person name="Allen J.E."/>
            <person name="Ambesi-Impiombato A."/>
            <person name="Apweiler R."/>
            <person name="Aturaliya R.N."/>
            <person name="Bailey T.L."/>
            <person name="Bansal M."/>
            <person name="Baxter L."/>
            <person name="Beisel K.W."/>
            <person name="Bersano T."/>
            <person name="Bono H."/>
            <person name="Chalk A.M."/>
            <person name="Chiu K.P."/>
            <person name="Choudhary V."/>
            <person name="Christoffels A."/>
            <person name="Clutterbuck D.R."/>
            <person name="Crowe M.L."/>
            <person name="Dalla E."/>
            <person name="Dalrymple B.P."/>
            <person name="de Bono B."/>
            <person name="Della Gatta G."/>
            <person name="di Bernardo D."/>
            <person name="Down T."/>
            <person name="Engstrom P."/>
            <person name="Fagiolini M."/>
            <person name="Faulkner G."/>
            <person name="Fletcher C.F."/>
            <person name="Fukushima T."/>
            <person name="Furuno M."/>
            <person name="Futaki S."/>
            <person name="Gariboldi M."/>
            <person name="Georgii-Hemming P."/>
            <person name="Gingeras T.R."/>
            <person name="Gojobori T."/>
            <person name="Green R.E."/>
            <person name="Gustincich S."/>
            <person name="Harbers M."/>
            <person name="Hayashi Y."/>
            <person name="Hensch T.K."/>
            <person name="Hirokawa N."/>
            <person name="Hill D."/>
            <person name="Huminiecki L."/>
            <person name="Iacono M."/>
            <person name="Ikeo K."/>
            <person name="Iwama A."/>
            <person name="Ishikawa T."/>
            <person name="Jakt M."/>
            <person name="Kanapin A."/>
            <person name="Katoh M."/>
            <person name="Kawasawa Y."/>
            <person name="Kelso J."/>
            <person name="Kitamura H."/>
            <person name="Kitano H."/>
            <person name="Kollias G."/>
            <person name="Krishnan S.P."/>
            <person name="Kruger A."/>
            <person name="Kummerfeld S.K."/>
            <person name="Kurochkin I.V."/>
            <person name="Lareau L.F."/>
            <person name="Lazarevic D."/>
            <person name="Lipovich L."/>
            <person name="Liu J."/>
            <person name="Liuni S."/>
            <person name="McWilliam S."/>
            <person name="Madan Babu M."/>
            <person name="Madera M."/>
            <person name="Marchionni L."/>
            <person name="Matsuda H."/>
            <person name="Matsuzawa S."/>
            <person name="Miki H."/>
            <person name="Mignone F."/>
            <person name="Miyake S."/>
            <person name="Morris K."/>
            <person name="Mottagui-Tabar S."/>
            <person name="Mulder N."/>
            <person name="Nakano N."/>
            <person name="Nakauchi H."/>
            <person name="Ng P."/>
            <person name="Nilsson R."/>
            <person name="Nishiguchi S."/>
            <person name="Nishikawa S."/>
            <person name="Nori F."/>
            <person name="Ohara O."/>
            <person name="Okazaki Y."/>
            <person name="Orlando V."/>
            <person name="Pang K.C."/>
            <person name="Pavan W.J."/>
            <person name="Pavesi G."/>
            <person name="Pesole G."/>
            <person name="Petrovsky N."/>
            <person name="Piazza S."/>
            <person name="Reed J."/>
            <person name="Reid J.F."/>
            <person name="Ring B.Z."/>
            <person name="Ringwald M."/>
            <person name="Rost B."/>
            <person name="Ruan Y."/>
            <person name="Salzberg S.L."/>
            <person name="Sandelin A."/>
            <person name="Schneider C."/>
            <person name="Schoenbach C."/>
            <person name="Sekiguchi K."/>
            <person name="Semple C.A."/>
            <person name="Seno S."/>
            <person name="Sessa L."/>
            <person name="Sheng Y."/>
            <person name="Shibata Y."/>
            <person name="Shimada H."/>
            <person name="Shimada K."/>
            <person name="Silva D."/>
            <person name="Sinclair B."/>
            <person name="Sperling S."/>
            <person name="Stupka E."/>
            <person name="Sugiura K."/>
            <person name="Sultana R."/>
            <person name="Takenaka Y."/>
            <person name="Taki K."/>
            <person name="Tammoja K."/>
            <person name="Tan S.L."/>
            <person name="Tang S."/>
            <person name="Taylor M.S."/>
            <person name="Tegner J."/>
            <person name="Teichmann S.A."/>
            <person name="Ueda H.R."/>
            <person name="van Nimwegen E."/>
            <person name="Verardo R."/>
            <person name="Wei C.L."/>
            <person name="Yagi K."/>
            <person name="Yamanishi H."/>
            <person name="Zabarovsky E."/>
            <person name="Zhu S."/>
            <person name="Zimmer A."/>
            <person name="Hide W."/>
            <person name="Bult C."/>
            <person name="Grimmond S.M."/>
            <person name="Teasdale R.D."/>
            <person name="Liu E.T."/>
            <person name="Brusic V."/>
            <person name="Quackenbush J."/>
            <person name="Wahlestedt C."/>
            <person name="Mattick J.S."/>
            <person name="Hume D.A."/>
            <person name="Kai C."/>
            <person name="Sasaki D."/>
            <person name="Tomaru Y."/>
            <person name="Fukuda S."/>
            <person name="Kanamori-Katayama M."/>
            <person name="Suzuki M."/>
            <person name="Aoki J."/>
            <person name="Arakawa T."/>
            <person name="Iida J."/>
            <person name="Imamura K."/>
            <person name="Itoh M."/>
            <person name="Kato T."/>
            <person name="Kawaji H."/>
            <person name="Kawagashira N."/>
            <person name="Kawashima T."/>
            <person name="Kojima M."/>
            <person name="Kondo S."/>
            <person name="Konno H."/>
            <person name="Nakano K."/>
            <person name="Ninomiya N."/>
            <person name="Nishio T."/>
            <person name="Okada M."/>
            <person name="Plessy C."/>
            <person name="Shibata K."/>
            <person name="Shiraki T."/>
            <person name="Suzuki S."/>
            <person name="Tagami M."/>
            <person name="Waki K."/>
            <person name="Watahiki A."/>
            <person name="Okamura-Oho Y."/>
            <person name="Suzuki H."/>
            <person name="Kawai J."/>
            <person name="Hayashizaki Y."/>
        </authorList>
    </citation>
    <scope>NUCLEOTIDE SEQUENCE [LARGE SCALE MRNA] (ISOFORMS 1; 2; 3 AND 4)</scope>
    <source>
        <strain>C57BL/6J</strain>
        <tissue>Egg</tissue>
        <tissue>Head</tissue>
        <tissue>Hippocampus</tissue>
    </source>
</reference>
<reference key="3">
    <citation type="journal article" date="2004" name="Genome Res.">
        <title>The status, quality, and expansion of the NIH full-length cDNA project: the Mammalian Gene Collection (MGC).</title>
        <authorList>
            <consortium name="The MGC Project Team"/>
        </authorList>
    </citation>
    <scope>NUCLEOTIDE SEQUENCE [LARGE SCALE MRNA] (ISOFORM 5)</scope>
    <source>
        <strain>129</strain>
        <tissue>Mammary tumor</tissue>
    </source>
</reference>
<reference key="4">
    <citation type="journal article" date="2003" name="Mol. Cell">
        <title>The TBN protein, which is essential for early embryonic mouse development, is an inducible TAFII implicated in adipogenesis.</title>
        <authorList>
            <person name="Guermah M."/>
            <person name="Ge K."/>
            <person name="Chiang C.-M."/>
            <person name="Roeder R.G."/>
        </authorList>
    </citation>
    <scope>FUNCTION</scope>
</reference>
<protein>
    <recommendedName>
        <fullName>Transcription initiation factor TFIID subunit 8</fullName>
    </recommendedName>
    <alternativeName>
        <fullName>Protein taube nuss</fullName>
    </alternativeName>
    <alternativeName>
        <fullName>TBP-associated factor 8</fullName>
    </alternativeName>
</protein>
<dbReference type="EMBL" id="AF222802">
    <property type="protein sequence ID" value="AAG01682.1"/>
    <property type="molecule type" value="mRNA"/>
</dbReference>
<dbReference type="EMBL" id="AK045108">
    <property type="protein sequence ID" value="BAC32225.1"/>
    <property type="molecule type" value="mRNA"/>
</dbReference>
<dbReference type="EMBL" id="AK049949">
    <property type="protein sequence ID" value="BAC34001.1"/>
    <property type="molecule type" value="mRNA"/>
</dbReference>
<dbReference type="EMBL" id="AK076486">
    <property type="protein sequence ID" value="BAC36363.1"/>
    <property type="molecule type" value="mRNA"/>
</dbReference>
<dbReference type="EMBL" id="AK086656">
    <property type="protein sequence ID" value="BAC39712.1"/>
    <property type="molecule type" value="mRNA"/>
</dbReference>
<dbReference type="EMBL" id="AK162110">
    <property type="protein sequence ID" value="BAE36731.1"/>
    <property type="molecule type" value="mRNA"/>
</dbReference>
<dbReference type="EMBL" id="BC057895">
    <property type="protein sequence ID" value="AAH57895.1"/>
    <property type="molecule type" value="mRNA"/>
</dbReference>
<dbReference type="CCDS" id="CCDS37642.1">
    <molecule id="Q9EQH4-1"/>
</dbReference>
<dbReference type="CCDS" id="CCDS89109.1">
    <molecule id="Q9EQH4-3"/>
</dbReference>
<dbReference type="RefSeq" id="NP_001343219.1">
    <molecule id="Q9EQH4-3"/>
    <property type="nucleotide sequence ID" value="NM_001356290.1"/>
</dbReference>
<dbReference type="RefSeq" id="NP_001397116.1">
    <molecule id="Q9EQH4-4"/>
    <property type="nucleotide sequence ID" value="NM_001410187.1"/>
</dbReference>
<dbReference type="RefSeq" id="NP_001397117.1">
    <molecule id="Q9EQH4-2"/>
    <property type="nucleotide sequence ID" value="NM_001410188.1"/>
</dbReference>
<dbReference type="RefSeq" id="NP_001397118.1">
    <molecule id="Q9EQH4-2"/>
    <property type="nucleotide sequence ID" value="NM_001410189.1"/>
</dbReference>
<dbReference type="RefSeq" id="NP_071298.1">
    <molecule id="Q9EQH4-1"/>
    <property type="nucleotide sequence ID" value="NM_022015.5"/>
</dbReference>
<dbReference type="RefSeq" id="XP_006524827.1">
    <property type="nucleotide sequence ID" value="XM_006524764.2"/>
</dbReference>
<dbReference type="RefSeq" id="XP_006524828.1">
    <property type="nucleotide sequence ID" value="XM_006524765.3"/>
</dbReference>
<dbReference type="RefSeq" id="XP_006524830.1">
    <property type="nucleotide sequence ID" value="XM_006524767.3"/>
</dbReference>
<dbReference type="SMR" id="Q9EQH4"/>
<dbReference type="ComplexPortal" id="CPX-932">
    <property type="entry name" value="General transcription factor complex TFIID"/>
</dbReference>
<dbReference type="ComplexPortal" id="CPX-959">
    <property type="entry name" value="General transcription factor complex TFIID, Taf4b variant"/>
</dbReference>
<dbReference type="CORUM" id="Q9EQH4"/>
<dbReference type="FunCoup" id="Q9EQH4">
    <property type="interactions" value="5058"/>
</dbReference>
<dbReference type="STRING" id="10090.ENSMUSP00000063201"/>
<dbReference type="iPTMnet" id="Q9EQH4"/>
<dbReference type="PhosphoSitePlus" id="Q9EQH4"/>
<dbReference type="PaxDb" id="10090-ENSMUSP00000063201"/>
<dbReference type="PeptideAtlas" id="Q9EQH4"/>
<dbReference type="ProteomicsDB" id="263244">
    <molecule id="Q9EQH4-1"/>
</dbReference>
<dbReference type="ProteomicsDB" id="263245">
    <molecule id="Q9EQH4-2"/>
</dbReference>
<dbReference type="ProteomicsDB" id="263246">
    <molecule id="Q9EQH4-3"/>
</dbReference>
<dbReference type="ProteomicsDB" id="263247">
    <molecule id="Q9EQH4-4"/>
</dbReference>
<dbReference type="ProteomicsDB" id="263248">
    <molecule id="Q9EQH4-5"/>
</dbReference>
<dbReference type="Pumba" id="Q9EQH4"/>
<dbReference type="Antibodypedia" id="30123">
    <property type="antibodies" value="143 antibodies from 21 providers"/>
</dbReference>
<dbReference type="DNASU" id="63856"/>
<dbReference type="Ensembl" id="ENSMUST00000067103.4">
    <molecule id="Q9EQH4-1"/>
    <property type="protein sequence ID" value="ENSMUSP00000063201.3"/>
    <property type="gene ID" value="ENSMUSG00000023980.8"/>
</dbReference>
<dbReference type="Ensembl" id="ENSMUST00000233121.2">
    <molecule id="Q9EQH4-2"/>
    <property type="protein sequence ID" value="ENSMUSP00000156629.2"/>
    <property type="gene ID" value="ENSMUSG00000023980.8"/>
</dbReference>
<dbReference type="Ensembl" id="ENSMUST00000233174.2">
    <molecule id="Q9EQH4-3"/>
    <property type="protein sequence ID" value="ENSMUSP00000156668.2"/>
    <property type="gene ID" value="ENSMUSG00000023980.8"/>
</dbReference>
<dbReference type="GeneID" id="63856"/>
<dbReference type="KEGG" id="mmu:63856"/>
<dbReference type="UCSC" id="uc008cvh.1">
    <molecule id="Q9EQH4-1"/>
    <property type="organism name" value="mouse"/>
</dbReference>
<dbReference type="UCSC" id="uc008cvj.1">
    <molecule id="Q9EQH4-4"/>
    <property type="organism name" value="mouse"/>
</dbReference>
<dbReference type="AGR" id="MGI:1926879"/>
<dbReference type="CTD" id="129685"/>
<dbReference type="MGI" id="MGI:1926879">
    <property type="gene designation" value="Taf8"/>
</dbReference>
<dbReference type="VEuPathDB" id="HostDB:ENSMUSG00000023980"/>
<dbReference type="eggNOG" id="KOG4336">
    <property type="taxonomic scope" value="Eukaryota"/>
</dbReference>
<dbReference type="GeneTree" id="ENSGT00390000017567"/>
<dbReference type="HOGENOM" id="CLU_070829_0_0_1"/>
<dbReference type="InParanoid" id="Q9EQH4"/>
<dbReference type="OMA" id="SAHNYCE"/>
<dbReference type="OrthoDB" id="2193813at2759"/>
<dbReference type="PhylomeDB" id="Q9EQH4"/>
<dbReference type="TreeFam" id="TF316311"/>
<dbReference type="Reactome" id="R-MMU-6807505">
    <property type="pathway name" value="RNA polymerase II transcribes snRNA genes"/>
</dbReference>
<dbReference type="BioGRID-ORCS" id="63856">
    <property type="hits" value="24 hits in 82 CRISPR screens"/>
</dbReference>
<dbReference type="ChiTaRS" id="Taf8">
    <property type="organism name" value="mouse"/>
</dbReference>
<dbReference type="PRO" id="PR:Q9EQH4"/>
<dbReference type="Proteomes" id="UP000000589">
    <property type="component" value="Chromosome 17"/>
</dbReference>
<dbReference type="RNAct" id="Q9EQH4">
    <property type="molecule type" value="protein"/>
</dbReference>
<dbReference type="Bgee" id="ENSMUSG00000023980">
    <property type="expression patterns" value="Expressed in granulocyte and 248 other cell types or tissues"/>
</dbReference>
<dbReference type="GO" id="GO:0005634">
    <property type="term" value="C:nucleus"/>
    <property type="evidence" value="ECO:0000266"/>
    <property type="project" value="ComplexPortal"/>
</dbReference>
<dbReference type="GO" id="GO:0048471">
    <property type="term" value="C:perinuclear region of cytoplasm"/>
    <property type="evidence" value="ECO:0007669"/>
    <property type="project" value="Ensembl"/>
</dbReference>
<dbReference type="GO" id="GO:0005669">
    <property type="term" value="C:transcription factor TFIID complex"/>
    <property type="evidence" value="ECO:0000250"/>
    <property type="project" value="UniProtKB"/>
</dbReference>
<dbReference type="GO" id="GO:0046982">
    <property type="term" value="F:protein heterodimerization activity"/>
    <property type="evidence" value="ECO:0007669"/>
    <property type="project" value="InterPro"/>
</dbReference>
<dbReference type="GO" id="GO:0030154">
    <property type="term" value="P:cell differentiation"/>
    <property type="evidence" value="ECO:0007669"/>
    <property type="project" value="UniProtKB-KW"/>
</dbReference>
<dbReference type="GO" id="GO:0001112">
    <property type="term" value="P:DNA-templated transcription open complex formation"/>
    <property type="evidence" value="ECO:0000266"/>
    <property type="project" value="MGI"/>
</dbReference>
<dbReference type="GO" id="GO:0001833">
    <property type="term" value="P:inner cell mass cell proliferation"/>
    <property type="evidence" value="ECO:0000315"/>
    <property type="project" value="MGI"/>
</dbReference>
<dbReference type="GO" id="GO:0051457">
    <property type="term" value="P:maintenance of protein location in nucleus"/>
    <property type="evidence" value="ECO:0007669"/>
    <property type="project" value="Ensembl"/>
</dbReference>
<dbReference type="GO" id="GO:0042789">
    <property type="term" value="P:mRNA transcription by RNA polymerase II"/>
    <property type="evidence" value="ECO:0000266"/>
    <property type="project" value="ComplexPortal"/>
</dbReference>
<dbReference type="GO" id="GO:0060261">
    <property type="term" value="P:positive regulation of transcription initiation by RNA polymerase II"/>
    <property type="evidence" value="ECO:0000266"/>
    <property type="project" value="ComplexPortal"/>
</dbReference>
<dbReference type="GO" id="GO:0045598">
    <property type="term" value="P:regulation of fat cell differentiation"/>
    <property type="evidence" value="ECO:0000266"/>
    <property type="project" value="MGI"/>
</dbReference>
<dbReference type="GO" id="GO:0051123">
    <property type="term" value="P:RNA polymerase II preinitiation complex assembly"/>
    <property type="evidence" value="ECO:0000266"/>
    <property type="project" value="ComplexPortal"/>
</dbReference>
<dbReference type="CDD" id="cd22918">
    <property type="entry name" value="HFD_TAF8"/>
    <property type="match status" value="1"/>
</dbReference>
<dbReference type="CDD" id="cd08049">
    <property type="entry name" value="TAF8"/>
    <property type="match status" value="1"/>
</dbReference>
<dbReference type="FunFam" id="1.10.20.10:FF:000031">
    <property type="entry name" value="transcription initiation factor TFIID subunit 8 isoform X2"/>
    <property type="match status" value="1"/>
</dbReference>
<dbReference type="Gene3D" id="1.10.20.10">
    <property type="entry name" value="Histone, subunit A"/>
    <property type="match status" value="1"/>
</dbReference>
<dbReference type="InterPro" id="IPR006565">
    <property type="entry name" value="BTP"/>
</dbReference>
<dbReference type="InterPro" id="IPR009072">
    <property type="entry name" value="Histone-fold"/>
</dbReference>
<dbReference type="InterPro" id="IPR037818">
    <property type="entry name" value="TAF8"/>
</dbReference>
<dbReference type="InterPro" id="IPR019473">
    <property type="entry name" value="TFIID_su8_C"/>
</dbReference>
<dbReference type="PANTHER" id="PTHR46469">
    <property type="entry name" value="TRANSCRIPTION INITIATION FACTOR TFIID SUBUNIT 8"/>
    <property type="match status" value="1"/>
</dbReference>
<dbReference type="PANTHER" id="PTHR46469:SF1">
    <property type="entry name" value="TRANSCRIPTION INITIATION FACTOR TFIID SUBUNIT 8"/>
    <property type="match status" value="1"/>
</dbReference>
<dbReference type="Pfam" id="PF07524">
    <property type="entry name" value="Bromo_TP"/>
    <property type="match status" value="1"/>
</dbReference>
<dbReference type="Pfam" id="PF10406">
    <property type="entry name" value="TAF8_C"/>
    <property type="match status" value="1"/>
</dbReference>
<dbReference type="SMART" id="SM00576">
    <property type="entry name" value="BTP"/>
    <property type="match status" value="1"/>
</dbReference>
<dbReference type="SUPFAM" id="SSF47113">
    <property type="entry name" value="Histone-fold"/>
    <property type="match status" value="1"/>
</dbReference>
<gene>
    <name type="primary">Taf8</name>
    <name type="synonym">Tbn</name>
</gene>
<keyword id="KW-0007">Acetylation</keyword>
<keyword id="KW-0025">Alternative splicing</keyword>
<keyword id="KW-0963">Cytoplasm</keyword>
<keyword id="KW-0217">Developmental protein</keyword>
<keyword id="KW-0221">Differentiation</keyword>
<keyword id="KW-0539">Nucleus</keyword>
<keyword id="KW-0597">Phosphoprotein</keyword>
<keyword id="KW-1185">Reference proteome</keyword>
<keyword id="KW-0804">Transcription</keyword>
<keyword id="KW-0805">Transcription regulation</keyword>
<comment type="function">
    <text evidence="1 4 5">The TFIID basal transcription factor complex plays a major role in the initiation of RNA polymerase II (Pol II)-dependent transcription (By similarity). TFIID recognizes and binds promoters with or without a TATA box via its subunit TBP, a TATA-box-binding protein, and promotes assembly of the pre-initiation complex (PIC) (By similarity). The TFIID complex consists of TBP and TBP-associated factors (TAFs), including TAF1, TAF2, TAF3, TAF4, TAF5, TAF6, TAF7, TAF8, TAF9, TAF10, TAF11, TAF12 and TAF13 (By similarity). The TFIID complex structure can be divided into 3 modules TFIID-A, TFIID-B, and TFIID-C (By similarity). TAF8 is involved in forming the TFIID-B module, together with TAF5 (By similarity). Mediates both basal and activator-dependent transcription (By similarity). Plays a role in the differentiation of preadipocyte fibroblasts to adipocytes, however, does not seem to play a role in differentiation of myoblasts (PubMed:14580349). Required for the integration of TAF10 in the TAF complex (By similarity). May be important for survival of cells of the inner cell mass which constitute the pluripotent cell population of the early embryo (PubMed:11076765).</text>
</comment>
<comment type="subunit">
    <text evidence="1">Component of the TFIID basal transcription factor complex, composed of TATA-box-binding protein TBP, and a number of TBP-associated factors (TAFs), including TAF1, TAF2, TAF3, TAF4, TAF5, TAF6, TAF7, TAF8, TAF9, TAF10, TAF11, TAF12 and TAF13. Interacts with TBP, TAF1, TAF6, TAF10, TAF11 and TAF13. Component also of a small TAF complex (SMAT) containing TAF8, TAF10 and SUPT7L. Forms a heterodimer with TAF10. Interaction with TAF10 is mediated mainly via its histone fold domain while interaction with SUPT7L is via its C-terminal region.</text>
</comment>
<comment type="subcellular location">
    <subcellularLocation>
        <location evidence="4">Nucleus</location>
    </subcellularLocation>
    <subcellularLocation>
        <location evidence="4">Cytoplasm</location>
    </subcellularLocation>
    <text>Localized in the cytoplasm and transported from the cytoplasm to the nucleus in some cells, possibly depending on the functional or developmental state of the cell.</text>
</comment>
<comment type="alternative products">
    <event type="alternative splicing"/>
    <isoform>
        <id>Q9EQH4-1</id>
        <name>1</name>
        <sequence type="displayed"/>
    </isoform>
    <isoform>
        <id>Q9EQH4-2</id>
        <name>2</name>
        <sequence type="described" ref="VSP_030555"/>
    </isoform>
    <isoform>
        <id>Q9EQH4-3</id>
        <name>3</name>
        <sequence type="described" ref="VSP_030553 VSP_030554"/>
    </isoform>
    <isoform>
        <id>Q9EQH4-4</id>
        <name>4</name>
        <sequence type="described" ref="VSP_030552"/>
    </isoform>
    <isoform>
        <id>Q9EQH4-5</id>
        <name>5</name>
        <sequence type="described" ref="VSP_030550 VSP_030551"/>
    </isoform>
</comment>
<comment type="tissue specificity">
    <text>Low level of expression throughout the brain with slightly higher expression in the hippocampus.</text>
</comment>
<comment type="developmental stage">
    <text evidence="4">Expressed ubiquitously at very low levels throughout embryonic development. Higher levels of expression seen in inner cell mass and heart.</text>
</comment>
<comment type="disruption phenotype">
    <text evidence="4">Death during early embryonic development. The inner cell mass cells of mutant embryos died of apoptosis.</text>
</comment>
<comment type="miscellaneous">
    <text>'Taube nuss' means 'empty nut' in German.</text>
</comment>
<comment type="similarity">
    <text evidence="8">Belongs to the TAF8 family.</text>
</comment>
<organism>
    <name type="scientific">Mus musculus</name>
    <name type="common">Mouse</name>
    <dbReference type="NCBI Taxonomy" id="10090"/>
    <lineage>
        <taxon>Eukaryota</taxon>
        <taxon>Metazoa</taxon>
        <taxon>Chordata</taxon>
        <taxon>Craniata</taxon>
        <taxon>Vertebrata</taxon>
        <taxon>Euteleostomi</taxon>
        <taxon>Mammalia</taxon>
        <taxon>Eutheria</taxon>
        <taxon>Euarchontoglires</taxon>
        <taxon>Glires</taxon>
        <taxon>Rodentia</taxon>
        <taxon>Myomorpha</taxon>
        <taxon>Muroidea</taxon>
        <taxon>Muridae</taxon>
        <taxon>Murinae</taxon>
        <taxon>Mus</taxon>
        <taxon>Mus</taxon>
    </lineage>
</organism>
<evidence type="ECO:0000250" key="1">
    <source>
        <dbReference type="UniProtKB" id="Q7Z7C8"/>
    </source>
</evidence>
<evidence type="ECO:0000255" key="2"/>
<evidence type="ECO:0000256" key="3">
    <source>
        <dbReference type="SAM" id="MobiDB-lite"/>
    </source>
</evidence>
<evidence type="ECO:0000269" key="4">
    <source>
    </source>
</evidence>
<evidence type="ECO:0000269" key="5">
    <source>
    </source>
</evidence>
<evidence type="ECO:0000303" key="6">
    <source>
    </source>
</evidence>
<evidence type="ECO:0000303" key="7">
    <source>
    </source>
</evidence>
<evidence type="ECO:0000305" key="8"/>
<sequence length="308" mass="33988">MADTAAGPGGSGTRPGSKQSTNPADNYHLARRRTLQVVVSSLLTEAGFESAEKASVETLTEMLQSYISEIGRSAKSYCEHTARTQPTLSDIVVTLVEMGFNVDTLPAYAKRSQRMVITAPPVTNQPVTPKALTAGQNRPHPPHIPSHFPEFPDPHTYIKTPTYREPVSDYQILREKAASQRRDVERALTRFMAKTGETQSLFKDDVSTFPLIAARPFTIPYLTALLPSELEIQQMEETDSSEQEEQTDTENNALHISTDDSGAEKESASVLQQSSSLSGSRNGEESVIDNPYLRPVKKPKIRRKKSLS</sequence>
<accession>Q9EQH4</accession>
<accession>Q3TSE4</accession>
<accession>Q6PES8</accession>
<accession>Q8C382</accession>
<accession>Q8C664</accession>
<accession>Q8C7L7</accession>
<proteinExistence type="evidence at transcript level"/>